<gene>
    <name evidence="1" type="primary">ihfA2</name>
    <name evidence="1" type="synonym">himA2</name>
    <name type="ordered locus">Daro_2671</name>
</gene>
<accession>Q47CN0</accession>
<dbReference type="EMBL" id="CP000089">
    <property type="protein sequence ID" value="AAZ47401.1"/>
    <property type="molecule type" value="Genomic_DNA"/>
</dbReference>
<dbReference type="SMR" id="Q47CN0"/>
<dbReference type="STRING" id="159087.Daro_2671"/>
<dbReference type="KEGG" id="dar:Daro_2671"/>
<dbReference type="eggNOG" id="COG0776">
    <property type="taxonomic scope" value="Bacteria"/>
</dbReference>
<dbReference type="HOGENOM" id="CLU_105066_1_3_4"/>
<dbReference type="OrthoDB" id="9797747at2"/>
<dbReference type="GO" id="GO:0005829">
    <property type="term" value="C:cytosol"/>
    <property type="evidence" value="ECO:0007669"/>
    <property type="project" value="TreeGrafter"/>
</dbReference>
<dbReference type="GO" id="GO:0003677">
    <property type="term" value="F:DNA binding"/>
    <property type="evidence" value="ECO:0007669"/>
    <property type="project" value="UniProtKB-UniRule"/>
</dbReference>
<dbReference type="GO" id="GO:0030527">
    <property type="term" value="F:structural constituent of chromatin"/>
    <property type="evidence" value="ECO:0007669"/>
    <property type="project" value="InterPro"/>
</dbReference>
<dbReference type="GO" id="GO:0006310">
    <property type="term" value="P:DNA recombination"/>
    <property type="evidence" value="ECO:0007669"/>
    <property type="project" value="UniProtKB-UniRule"/>
</dbReference>
<dbReference type="GO" id="GO:0009893">
    <property type="term" value="P:positive regulation of metabolic process"/>
    <property type="evidence" value="ECO:0007669"/>
    <property type="project" value="UniProtKB-ARBA"/>
</dbReference>
<dbReference type="GO" id="GO:0006355">
    <property type="term" value="P:regulation of DNA-templated transcription"/>
    <property type="evidence" value="ECO:0007669"/>
    <property type="project" value="UniProtKB-UniRule"/>
</dbReference>
<dbReference type="GO" id="GO:0006417">
    <property type="term" value="P:regulation of translation"/>
    <property type="evidence" value="ECO:0007669"/>
    <property type="project" value="UniProtKB-UniRule"/>
</dbReference>
<dbReference type="CDD" id="cd13835">
    <property type="entry name" value="IHF_A"/>
    <property type="match status" value="1"/>
</dbReference>
<dbReference type="FunFam" id="4.10.520.10:FF:000002">
    <property type="entry name" value="Integration host factor subunit alpha"/>
    <property type="match status" value="1"/>
</dbReference>
<dbReference type="Gene3D" id="4.10.520.10">
    <property type="entry name" value="IHF-like DNA-binding proteins"/>
    <property type="match status" value="1"/>
</dbReference>
<dbReference type="HAMAP" id="MF_00380">
    <property type="entry name" value="IHF_alpha"/>
    <property type="match status" value="1"/>
</dbReference>
<dbReference type="InterPro" id="IPR000119">
    <property type="entry name" value="Hist_DNA-bd"/>
</dbReference>
<dbReference type="InterPro" id="IPR020816">
    <property type="entry name" value="Histone-like_DNA-bd_CS"/>
</dbReference>
<dbReference type="InterPro" id="IPR010992">
    <property type="entry name" value="IHF-like_DNA-bd_dom_sf"/>
</dbReference>
<dbReference type="InterPro" id="IPR005684">
    <property type="entry name" value="IHF_alpha"/>
</dbReference>
<dbReference type="NCBIfam" id="TIGR00987">
    <property type="entry name" value="himA"/>
    <property type="match status" value="1"/>
</dbReference>
<dbReference type="NCBIfam" id="NF001401">
    <property type="entry name" value="PRK00285.1"/>
    <property type="match status" value="1"/>
</dbReference>
<dbReference type="PANTHER" id="PTHR33175">
    <property type="entry name" value="DNA-BINDING PROTEIN HU"/>
    <property type="match status" value="1"/>
</dbReference>
<dbReference type="PANTHER" id="PTHR33175:SF2">
    <property type="entry name" value="INTEGRATION HOST FACTOR SUBUNIT ALPHA"/>
    <property type="match status" value="1"/>
</dbReference>
<dbReference type="Pfam" id="PF00216">
    <property type="entry name" value="Bac_DNA_binding"/>
    <property type="match status" value="1"/>
</dbReference>
<dbReference type="PRINTS" id="PR01727">
    <property type="entry name" value="DNABINDINGHU"/>
</dbReference>
<dbReference type="SMART" id="SM00411">
    <property type="entry name" value="BHL"/>
    <property type="match status" value="1"/>
</dbReference>
<dbReference type="SUPFAM" id="SSF47729">
    <property type="entry name" value="IHF-like DNA-binding proteins"/>
    <property type="match status" value="1"/>
</dbReference>
<dbReference type="PROSITE" id="PS00045">
    <property type="entry name" value="HISTONE_LIKE"/>
    <property type="match status" value="1"/>
</dbReference>
<reference key="1">
    <citation type="journal article" date="2009" name="BMC Genomics">
        <title>Metabolic analysis of the soil microbe Dechloromonas aromatica str. RCB: indications of a surprisingly complex life-style and cryptic anaerobic pathways for aromatic degradation.</title>
        <authorList>
            <person name="Salinero K.K."/>
            <person name="Keller K."/>
            <person name="Feil W.S."/>
            <person name="Feil H."/>
            <person name="Trong S."/>
            <person name="Di Bartolo G."/>
            <person name="Lapidus A."/>
        </authorList>
    </citation>
    <scope>NUCLEOTIDE SEQUENCE [LARGE SCALE GENOMIC DNA]</scope>
    <source>
        <strain>RCB</strain>
    </source>
</reference>
<keyword id="KW-0233">DNA recombination</keyword>
<keyword id="KW-0238">DNA-binding</keyword>
<keyword id="KW-0804">Transcription</keyword>
<keyword id="KW-0805">Transcription regulation</keyword>
<keyword id="KW-0810">Translation regulation</keyword>
<sequence>MTLTKAELADLLFEKVGLNKREAKDMVEAFFEEIRNALEVGDGVKLSGFGNFQLRDKPQRPGRNPKTGQEIPITARRVVTFHASQKLKSDVELAFDGTAA</sequence>
<proteinExistence type="inferred from homology"/>
<feature type="chain" id="PRO_0000277727" description="Integration host factor subunit alpha 2">
    <location>
        <begin position="1"/>
        <end position="100"/>
    </location>
</feature>
<comment type="function">
    <text evidence="1">This protein is one of the two subunits of integration host factor, a specific DNA-binding protein that functions in genetic recombination as well as in transcriptional and translational control.</text>
</comment>
<comment type="subunit">
    <text evidence="1">Heterodimer of an alpha and a beta chain.</text>
</comment>
<comment type="similarity">
    <text evidence="1">Belongs to the bacterial histone-like protein family.</text>
</comment>
<evidence type="ECO:0000255" key="1">
    <source>
        <dbReference type="HAMAP-Rule" id="MF_00380"/>
    </source>
</evidence>
<organism>
    <name type="scientific">Dechloromonas aromatica (strain RCB)</name>
    <dbReference type="NCBI Taxonomy" id="159087"/>
    <lineage>
        <taxon>Bacteria</taxon>
        <taxon>Pseudomonadati</taxon>
        <taxon>Pseudomonadota</taxon>
        <taxon>Betaproteobacteria</taxon>
        <taxon>Rhodocyclales</taxon>
        <taxon>Azonexaceae</taxon>
        <taxon>Dechloromonas</taxon>
    </lineage>
</organism>
<name>IHFA2_DECAR</name>
<protein>
    <recommendedName>
        <fullName evidence="1">Integration host factor subunit alpha 2</fullName>
        <shortName evidence="1">IHF-alpha 2</shortName>
    </recommendedName>
</protein>